<organism>
    <name type="scientific">Eremothecium gossypii (strain ATCC 10895 / CBS 109.51 / FGSC 9923 / NRRL Y-1056)</name>
    <name type="common">Yeast</name>
    <name type="synonym">Ashbya gossypii</name>
    <dbReference type="NCBI Taxonomy" id="284811"/>
    <lineage>
        <taxon>Eukaryota</taxon>
        <taxon>Fungi</taxon>
        <taxon>Dikarya</taxon>
        <taxon>Ascomycota</taxon>
        <taxon>Saccharomycotina</taxon>
        <taxon>Saccharomycetes</taxon>
        <taxon>Saccharomycetales</taxon>
        <taxon>Saccharomycetaceae</taxon>
        <taxon>Eremothecium</taxon>
    </lineage>
</organism>
<accession>Q74ZW4</accession>
<keyword id="KW-0056">Arginine metabolism</keyword>
<keyword id="KW-0963">Cytoplasm</keyword>
<keyword id="KW-0378">Hydrolase</keyword>
<keyword id="KW-0464">Manganese</keyword>
<keyword id="KW-0479">Metal-binding</keyword>
<keyword id="KW-1185">Reference proteome</keyword>
<keyword id="KW-0835">Urea cycle</keyword>
<protein>
    <recommendedName>
        <fullName>Arginase</fullName>
        <ecNumber evidence="2">3.5.3.1</ecNumber>
    </recommendedName>
</protein>
<name>ARGI_EREGS</name>
<proteinExistence type="inferred from homology"/>
<sequence>MAQRNCWRRSWLGVGGGLCLGAHGAARGPRQLFHLTAKQSSAASDAKCRRWRAAGRGGGAGGVYNGRGAAAGSRQTSGMAHNEHPHYKFFESKKASLVMAPFSGGQGKSGVEDGPKYLLKQGLREGVEGLGWEIEVQRPLDGHDFEERKQRATEVVGRAKNPTLVGEATHLIHDAVRAAAHAGRLPVTLGGDHSIAIGTVSGVLDRYPDAGLLWVDAHADINTLASTESGNLHGCPVSFLMGLERESWPAPLAWVPGTLRPSKIAYIGLRDVDPEEKEILRRLGITAFSMYHVDRYGINKVVEMALAAINPDGTGPVMVSYDVDAIDPMYVPATGTPVRGGLTLREGLFIVERVAETGNLVALDVVECNPELAAHDLHVVDTVQTGCSIARCALGETLL</sequence>
<comment type="catalytic activity">
    <reaction evidence="2">
        <text>L-arginine + H2O = urea + L-ornithine</text>
        <dbReference type="Rhea" id="RHEA:20569"/>
        <dbReference type="ChEBI" id="CHEBI:15377"/>
        <dbReference type="ChEBI" id="CHEBI:16199"/>
        <dbReference type="ChEBI" id="CHEBI:32682"/>
        <dbReference type="ChEBI" id="CHEBI:46911"/>
        <dbReference type="EC" id="3.5.3.1"/>
    </reaction>
</comment>
<comment type="cofactor">
    <cofactor evidence="4">
        <name>Mn(2+)</name>
        <dbReference type="ChEBI" id="CHEBI:29035"/>
    </cofactor>
    <text evidence="4">Binds 2 manganese ions per subunit.</text>
</comment>
<comment type="pathway">
    <text evidence="2">Nitrogen metabolism; urea cycle; L-ornithine and urea from L-arginine: step 1/1.</text>
</comment>
<comment type="subcellular location">
    <subcellularLocation>
        <location evidence="1">Cytoplasm</location>
    </subcellularLocation>
</comment>
<comment type="similarity">
    <text evidence="4">Belongs to the arginase family.</text>
</comment>
<reference key="1">
    <citation type="journal article" date="2004" name="Science">
        <title>The Ashbya gossypii genome as a tool for mapping the ancient Saccharomyces cerevisiae genome.</title>
        <authorList>
            <person name="Dietrich F.S."/>
            <person name="Voegeli S."/>
            <person name="Brachat S."/>
            <person name="Lerch A."/>
            <person name="Gates K."/>
            <person name="Steiner S."/>
            <person name="Mohr C."/>
            <person name="Poehlmann R."/>
            <person name="Luedi P."/>
            <person name="Choi S."/>
            <person name="Wing R.A."/>
            <person name="Flavier A."/>
            <person name="Gaffney T.D."/>
            <person name="Philippsen P."/>
        </authorList>
    </citation>
    <scope>NUCLEOTIDE SEQUENCE [LARGE SCALE GENOMIC DNA]</scope>
    <source>
        <strain>ATCC 10895 / CBS 109.51 / FGSC 9923 / NRRL Y-1056</strain>
    </source>
</reference>
<reference key="2">
    <citation type="journal article" date="2013" name="G3 (Bethesda)">
        <title>Genomes of Ashbya fungi isolated from insects reveal four mating-type loci, numerous translocations, lack of transposons, and distinct gene duplications.</title>
        <authorList>
            <person name="Dietrich F.S."/>
            <person name="Voegeli S."/>
            <person name="Kuo S."/>
            <person name="Philippsen P."/>
        </authorList>
    </citation>
    <scope>GENOME REANNOTATION</scope>
    <source>
        <strain>ATCC 10895 / CBS 109.51 / FGSC 9923 / NRRL Y-1056</strain>
    </source>
</reference>
<gene>
    <name type="primary">CAR1</name>
    <name type="ordered locus">AGR225C</name>
</gene>
<dbReference type="EC" id="3.5.3.1" evidence="2"/>
<dbReference type="EMBL" id="AE016820">
    <property type="protein sequence ID" value="AAS54715.1"/>
    <property type="molecule type" value="Genomic_DNA"/>
</dbReference>
<dbReference type="RefSeq" id="NP_986891.1">
    <property type="nucleotide sequence ID" value="NM_211953.1"/>
</dbReference>
<dbReference type="SMR" id="Q74ZW4"/>
<dbReference type="FunCoup" id="Q74ZW4">
    <property type="interactions" value="1396"/>
</dbReference>
<dbReference type="STRING" id="284811.Q74ZW4"/>
<dbReference type="EnsemblFungi" id="AAS54715">
    <property type="protein sequence ID" value="AAS54715"/>
    <property type="gene ID" value="AGOS_AGR225C"/>
</dbReference>
<dbReference type="GeneID" id="4623193"/>
<dbReference type="KEGG" id="ago:AGOS_AGR225C"/>
<dbReference type="eggNOG" id="KOG2965">
    <property type="taxonomic scope" value="Eukaryota"/>
</dbReference>
<dbReference type="HOGENOM" id="CLU_039478_6_1_1"/>
<dbReference type="InParanoid" id="Q74ZW4"/>
<dbReference type="OMA" id="FSWMTPC"/>
<dbReference type="OrthoDB" id="9992747at2759"/>
<dbReference type="UniPathway" id="UPA00158">
    <property type="reaction ID" value="UER00270"/>
</dbReference>
<dbReference type="Proteomes" id="UP000000591">
    <property type="component" value="Chromosome VII"/>
</dbReference>
<dbReference type="GO" id="GO:0005737">
    <property type="term" value="C:cytoplasm"/>
    <property type="evidence" value="ECO:0000318"/>
    <property type="project" value="GO_Central"/>
</dbReference>
<dbReference type="GO" id="GO:0005829">
    <property type="term" value="C:cytosol"/>
    <property type="evidence" value="ECO:0000318"/>
    <property type="project" value="GO_Central"/>
</dbReference>
<dbReference type="GO" id="GO:1903269">
    <property type="term" value="C:ornithine carbamoyltransferase inhibitor complex"/>
    <property type="evidence" value="ECO:0007669"/>
    <property type="project" value="EnsemblFungi"/>
</dbReference>
<dbReference type="GO" id="GO:0004053">
    <property type="term" value="F:arginase activity"/>
    <property type="evidence" value="ECO:0000318"/>
    <property type="project" value="GO_Central"/>
</dbReference>
<dbReference type="GO" id="GO:0030145">
    <property type="term" value="F:manganese ion binding"/>
    <property type="evidence" value="ECO:0000318"/>
    <property type="project" value="GO_Central"/>
</dbReference>
<dbReference type="GO" id="GO:0090369">
    <property type="term" value="F:ornithine carbamoyltransferase inhibitor activity"/>
    <property type="evidence" value="ECO:0007669"/>
    <property type="project" value="EnsemblFungi"/>
</dbReference>
<dbReference type="GO" id="GO:0008270">
    <property type="term" value="F:zinc ion binding"/>
    <property type="evidence" value="ECO:0007669"/>
    <property type="project" value="EnsemblFungi"/>
</dbReference>
<dbReference type="GO" id="GO:0019547">
    <property type="term" value="P:arginine catabolic process to ornithine"/>
    <property type="evidence" value="ECO:0000318"/>
    <property type="project" value="GO_Central"/>
</dbReference>
<dbReference type="GO" id="GO:0090368">
    <property type="term" value="P:regulation of ornithine metabolic process"/>
    <property type="evidence" value="ECO:0007669"/>
    <property type="project" value="EnsemblFungi"/>
</dbReference>
<dbReference type="GO" id="GO:0000050">
    <property type="term" value="P:urea cycle"/>
    <property type="evidence" value="ECO:0007669"/>
    <property type="project" value="UniProtKB-UniPathway"/>
</dbReference>
<dbReference type="CDD" id="cd09989">
    <property type="entry name" value="Arginase"/>
    <property type="match status" value="1"/>
</dbReference>
<dbReference type="FunFam" id="3.40.800.10:FF:000009">
    <property type="entry name" value="Arginase"/>
    <property type="match status" value="1"/>
</dbReference>
<dbReference type="Gene3D" id="3.40.800.10">
    <property type="entry name" value="Ureohydrolase domain"/>
    <property type="match status" value="1"/>
</dbReference>
<dbReference type="InterPro" id="IPR014033">
    <property type="entry name" value="Arginase"/>
</dbReference>
<dbReference type="InterPro" id="IPR006035">
    <property type="entry name" value="Ureohydrolase"/>
</dbReference>
<dbReference type="InterPro" id="IPR023696">
    <property type="entry name" value="Ureohydrolase_dom_sf"/>
</dbReference>
<dbReference type="InterPro" id="IPR020855">
    <property type="entry name" value="Ureohydrolase_Mn_BS"/>
</dbReference>
<dbReference type="NCBIfam" id="TIGR01229">
    <property type="entry name" value="rocF_arginase"/>
    <property type="match status" value="1"/>
</dbReference>
<dbReference type="PANTHER" id="PTHR43782">
    <property type="entry name" value="ARGINASE"/>
    <property type="match status" value="1"/>
</dbReference>
<dbReference type="PANTHER" id="PTHR43782:SF3">
    <property type="entry name" value="ARGINASE"/>
    <property type="match status" value="1"/>
</dbReference>
<dbReference type="Pfam" id="PF00491">
    <property type="entry name" value="Arginase"/>
    <property type="match status" value="1"/>
</dbReference>
<dbReference type="PRINTS" id="PR00116">
    <property type="entry name" value="ARGINASE"/>
</dbReference>
<dbReference type="SUPFAM" id="SSF52768">
    <property type="entry name" value="Arginase/deacetylase"/>
    <property type="match status" value="1"/>
</dbReference>
<dbReference type="PROSITE" id="PS01053">
    <property type="entry name" value="ARGINASE_1"/>
    <property type="match status" value="1"/>
</dbReference>
<dbReference type="PROSITE" id="PS51409">
    <property type="entry name" value="ARGINASE_2"/>
    <property type="match status" value="1"/>
</dbReference>
<feature type="chain" id="PRO_0000173706" description="Arginase">
    <location>
        <begin position="1"/>
        <end position="399"/>
    </location>
</feature>
<feature type="binding site" evidence="4">
    <location>
        <position position="193"/>
    </location>
    <ligand>
        <name>Mn(2+)</name>
        <dbReference type="ChEBI" id="CHEBI:29035"/>
        <label>1</label>
    </ligand>
</feature>
<feature type="binding site" evidence="4">
    <location>
        <position position="216"/>
    </location>
    <ligand>
        <name>Mn(2+)</name>
        <dbReference type="ChEBI" id="CHEBI:29035"/>
        <label>1</label>
    </ligand>
</feature>
<feature type="binding site" evidence="4">
    <location>
        <position position="216"/>
    </location>
    <ligand>
        <name>Mn(2+)</name>
        <dbReference type="ChEBI" id="CHEBI:29035"/>
        <label>2</label>
    </ligand>
</feature>
<feature type="binding site" evidence="3">
    <location>
        <begin position="218"/>
        <end position="222"/>
    </location>
    <ligand>
        <name>substrate</name>
    </ligand>
</feature>
<feature type="binding site" evidence="4">
    <location>
        <position position="218"/>
    </location>
    <ligand>
        <name>Mn(2+)</name>
        <dbReference type="ChEBI" id="CHEBI:29035"/>
        <label>2</label>
    </ligand>
</feature>
<feature type="binding site" evidence="4">
    <location>
        <position position="220"/>
    </location>
    <ligand>
        <name>Mn(2+)</name>
        <dbReference type="ChEBI" id="CHEBI:29035"/>
        <label>1</label>
    </ligand>
</feature>
<feature type="binding site" evidence="3">
    <location>
        <begin position="229"/>
        <end position="231"/>
    </location>
    <ligand>
        <name>substrate</name>
    </ligand>
</feature>
<feature type="binding site" evidence="3">
    <location>
        <position position="273"/>
    </location>
    <ligand>
        <name>substrate</name>
    </ligand>
</feature>
<feature type="binding site" evidence="4">
    <location>
        <position position="322"/>
    </location>
    <ligand>
        <name>Mn(2+)</name>
        <dbReference type="ChEBI" id="CHEBI:29035"/>
        <label>1</label>
    </ligand>
</feature>
<feature type="binding site" evidence="4">
    <location>
        <position position="322"/>
    </location>
    <ligand>
        <name>Mn(2+)</name>
        <dbReference type="ChEBI" id="CHEBI:29035"/>
        <label>2</label>
    </ligand>
</feature>
<feature type="binding site" evidence="4">
    <location>
        <position position="324"/>
    </location>
    <ligand>
        <name>Mn(2+)</name>
        <dbReference type="ChEBI" id="CHEBI:29035"/>
        <label>2</label>
    </ligand>
</feature>
<feature type="binding site" evidence="3">
    <location>
        <position position="336"/>
    </location>
    <ligand>
        <name>substrate</name>
    </ligand>
</feature>
<feature type="binding site" evidence="3">
    <location>
        <position position="367"/>
    </location>
    <ligand>
        <name>substrate</name>
    </ligand>
</feature>
<evidence type="ECO:0000250" key="1"/>
<evidence type="ECO:0000250" key="2">
    <source>
        <dbReference type="UniProtKB" id="P05089"/>
    </source>
</evidence>
<evidence type="ECO:0000250" key="3">
    <source>
        <dbReference type="UniProtKB" id="P53608"/>
    </source>
</evidence>
<evidence type="ECO:0000255" key="4">
    <source>
        <dbReference type="PROSITE-ProRule" id="PRU00742"/>
    </source>
</evidence>